<dbReference type="EMBL" id="AF314169">
    <property type="protein sequence ID" value="AAG29548.1"/>
    <property type="molecule type" value="Genomic_DNA"/>
</dbReference>
<dbReference type="EMBL" id="CU329671">
    <property type="protein sequence ID" value="CAA22117.1"/>
    <property type="molecule type" value="Genomic_DNA"/>
</dbReference>
<dbReference type="EMBL" id="AB027783">
    <property type="protein sequence ID" value="BAA87087.1"/>
    <property type="molecule type" value="Genomic_DNA"/>
</dbReference>
<dbReference type="PIR" id="T39893">
    <property type="entry name" value="T39893"/>
</dbReference>
<dbReference type="RefSeq" id="NP_596680.1">
    <property type="nucleotide sequence ID" value="NM_001022603.2"/>
</dbReference>
<dbReference type="SMR" id="O94308"/>
<dbReference type="BioGRID" id="276881">
    <property type="interactions" value="191"/>
</dbReference>
<dbReference type="FunCoup" id="O94308">
    <property type="interactions" value="596"/>
</dbReference>
<dbReference type="IntAct" id="O94308">
    <property type="interactions" value="2"/>
</dbReference>
<dbReference type="STRING" id="284812.O94308"/>
<dbReference type="iPTMnet" id="O94308"/>
<dbReference type="PaxDb" id="4896-SPBC215.03c.1"/>
<dbReference type="EnsemblFungi" id="SPBC215.03c.1">
    <property type="protein sequence ID" value="SPBC215.03c.1:pep"/>
    <property type="gene ID" value="SPBC215.03c"/>
</dbReference>
<dbReference type="GeneID" id="2540352"/>
<dbReference type="KEGG" id="spo:2540352"/>
<dbReference type="PomBase" id="SPBC215.03c">
    <property type="gene designation" value="csn1"/>
</dbReference>
<dbReference type="VEuPathDB" id="FungiDB:SPBC215.03c"/>
<dbReference type="eggNOG" id="KOG0686">
    <property type="taxonomic scope" value="Eukaryota"/>
</dbReference>
<dbReference type="HOGENOM" id="CLU_022348_1_1_1"/>
<dbReference type="InParanoid" id="O94308"/>
<dbReference type="OMA" id="RGIDEQW"/>
<dbReference type="PhylomeDB" id="O94308"/>
<dbReference type="PRO" id="PR:O94308"/>
<dbReference type="Proteomes" id="UP000002485">
    <property type="component" value="Chromosome II"/>
</dbReference>
<dbReference type="GO" id="GO:0008180">
    <property type="term" value="C:COP9 signalosome"/>
    <property type="evidence" value="ECO:0000318"/>
    <property type="project" value="GO_Central"/>
</dbReference>
<dbReference type="GO" id="GO:0005829">
    <property type="term" value="C:cytosol"/>
    <property type="evidence" value="ECO:0007005"/>
    <property type="project" value="PomBase"/>
</dbReference>
<dbReference type="GO" id="GO:0005634">
    <property type="term" value="C:nucleus"/>
    <property type="evidence" value="ECO:0007005"/>
    <property type="project" value="PomBase"/>
</dbReference>
<dbReference type="GO" id="GO:0006974">
    <property type="term" value="P:DNA damage response"/>
    <property type="evidence" value="ECO:0000315"/>
    <property type="project" value="PomBase"/>
</dbReference>
<dbReference type="GO" id="GO:0000338">
    <property type="term" value="P:protein deneddylation"/>
    <property type="evidence" value="ECO:0000315"/>
    <property type="project" value="PomBase"/>
</dbReference>
<dbReference type="Gene3D" id="1.25.40.570">
    <property type="match status" value="1"/>
</dbReference>
<dbReference type="InterPro" id="IPR000717">
    <property type="entry name" value="PCI_dom"/>
</dbReference>
<dbReference type="InterPro" id="IPR019585">
    <property type="entry name" value="Rpn7/CSN1"/>
</dbReference>
<dbReference type="InterPro" id="IPR045135">
    <property type="entry name" value="Rpn7_N"/>
</dbReference>
<dbReference type="InterPro" id="IPR011990">
    <property type="entry name" value="TPR-like_helical_dom_sf"/>
</dbReference>
<dbReference type="InterPro" id="IPR036390">
    <property type="entry name" value="WH_DNA-bd_sf"/>
</dbReference>
<dbReference type="PANTHER" id="PTHR14145">
    <property type="entry name" value="26S PROTESOME SUBUNIT 6"/>
    <property type="match status" value="1"/>
</dbReference>
<dbReference type="PANTHER" id="PTHR14145:SF2">
    <property type="entry name" value="COP9 SIGNALOSOME COMPLEX SUBUNIT 1"/>
    <property type="match status" value="1"/>
</dbReference>
<dbReference type="Pfam" id="PF01399">
    <property type="entry name" value="PCI"/>
    <property type="match status" value="1"/>
</dbReference>
<dbReference type="Pfam" id="PF10602">
    <property type="entry name" value="RPN7"/>
    <property type="match status" value="1"/>
</dbReference>
<dbReference type="SMART" id="SM00088">
    <property type="entry name" value="PINT"/>
    <property type="match status" value="1"/>
</dbReference>
<dbReference type="SUPFAM" id="SSF48452">
    <property type="entry name" value="TPR-like"/>
    <property type="match status" value="1"/>
</dbReference>
<dbReference type="SUPFAM" id="SSF46785">
    <property type="entry name" value="Winged helix' DNA-binding domain"/>
    <property type="match status" value="1"/>
</dbReference>
<dbReference type="PROSITE" id="PS50250">
    <property type="entry name" value="PCI"/>
    <property type="match status" value="1"/>
</dbReference>
<evidence type="ECO:0000250" key="1"/>
<evidence type="ECO:0000255" key="2">
    <source>
        <dbReference type="PROSITE-ProRule" id="PRU01185"/>
    </source>
</evidence>
<evidence type="ECO:0000269" key="3">
    <source>
    </source>
</evidence>
<evidence type="ECO:0000269" key="4">
    <source>
    </source>
</evidence>
<evidence type="ECO:0000305" key="5"/>
<accession>O94308</accession>
<accession>Q9USF8</accession>
<sequence length="422" mass="48657">MSLNLLVNQEELKRYLDEYGVWSKIFRALFVARNSKPLRSFCVHYAIKELKEKTYNLELYQSLFEEFQDCFENEQLDVEWVESVTFHRKQNLEQLRRELKAYKNNLIRESIRAAQLDLASFFADVGQFDSALRSYAKVREYCTNAGQIAHLSLELMRISIWIGNYSHVLAFGSRAKSTVSAAMELTSPIYAYCGLANFCLGDYEEALAHFLKVETDTSDGIITKTDISVYISLCALACWDHKRLIQELERNEEFNALSDLDPSLRRCLQAKCNRKYSLLLDTLQQNAQDYSLDMYLAPQLTNLFSLIRERSLLDYLIPYSALPFSKIAVDFHIDENFIEKNLLEIIEAKKLNGKVDSLQKRVYIEPSSEPENFEDIKNIAQTSLLYSKALYLQTLAAMNTENTDDEAPVIAQTNITAEDSQN</sequence>
<proteinExistence type="evidence at protein level"/>
<keyword id="KW-0963">Cytoplasm</keyword>
<keyword id="KW-0539">Nucleus</keyword>
<keyword id="KW-1185">Reference proteome</keyword>
<keyword id="KW-0736">Signalosome</keyword>
<organism>
    <name type="scientific">Schizosaccharomyces pombe (strain 972 / ATCC 24843)</name>
    <name type="common">Fission yeast</name>
    <dbReference type="NCBI Taxonomy" id="284812"/>
    <lineage>
        <taxon>Eukaryota</taxon>
        <taxon>Fungi</taxon>
        <taxon>Dikarya</taxon>
        <taxon>Ascomycota</taxon>
        <taxon>Taphrinomycotina</taxon>
        <taxon>Schizosaccharomycetes</taxon>
        <taxon>Schizosaccharomycetales</taxon>
        <taxon>Schizosaccharomycetaceae</taxon>
        <taxon>Schizosaccharomyces</taxon>
    </lineage>
</organism>
<comment type="function">
    <text evidence="1 4">Component of the COP9 signalosome (CSN) complex that acts as an regulator of the ubiquitin (Ubl) conjugation pathway by mediating the deneddylation of the cullin subunit of SCF-type E3 ubiquitin-protein ligase complexes (By similarity). Required, indirectly, for activation of ribonucleotide reductase through the degradation of the protein spd1, thereby supplying deoxyribonucleotides for DNA replication and repair.</text>
</comment>
<comment type="subunit">
    <text evidence="3">Component of the COP9 signalosome (CSN) complex composed of at least csn1, csn2, csn4 and csn5 subunits.</text>
</comment>
<comment type="interaction">
    <interactant intactId="EBI-3647868">
        <id>O94308</id>
    </interactant>
    <interactant intactId="EBI-3505190">
        <id>Q10990</id>
        <label>cdt2</label>
    </interactant>
    <organismsDiffer>false</organismsDiffer>
    <experiments>2</experiments>
</comment>
<comment type="subcellular location">
    <subcellularLocation>
        <location>Cytoplasm</location>
    </subcellularLocation>
    <subcellularLocation>
        <location>Nucleus</location>
    </subcellularLocation>
</comment>
<comment type="similarity">
    <text evidence="5">Belongs to the CSN1 family.</text>
</comment>
<name>CSN1_SCHPO</name>
<feature type="chain" id="PRO_0000120967" description="COP9 signalosome complex subunit 1">
    <location>
        <begin position="1"/>
        <end position="422"/>
    </location>
</feature>
<feature type="domain" description="PCI" evidence="2">
    <location>
        <begin position="202"/>
        <end position="369"/>
    </location>
</feature>
<protein>
    <recommendedName>
        <fullName>COP9 signalosome complex subunit 1</fullName>
        <shortName>CSN complex subunit 1</shortName>
        <shortName>SGN1</shortName>
    </recommendedName>
</protein>
<gene>
    <name type="primary">csn1</name>
    <name type="ORF">SPBC215.03c</name>
</gene>
<reference key="1">
    <citation type="journal article" date="2002" name="Mol. Biol. Cell">
        <title>Deletion mutants in COP9/signalosome subunits in fission yeast Schizosaccharomyces pombe display distinct phenotypes.</title>
        <authorList>
            <person name="Mundt K.E."/>
            <person name="Liu C."/>
            <person name="Carr A.M."/>
        </authorList>
    </citation>
    <scope>NUCLEOTIDE SEQUENCE [GENOMIC DNA]</scope>
    <scope>SUBUNIT</scope>
    <scope>SUBCELLULAR LOCATION</scope>
</reference>
<reference key="2">
    <citation type="journal article" date="2002" name="Nature">
        <title>The genome sequence of Schizosaccharomyces pombe.</title>
        <authorList>
            <person name="Wood V."/>
            <person name="Gwilliam R."/>
            <person name="Rajandream M.A."/>
            <person name="Lyne M.H."/>
            <person name="Lyne R."/>
            <person name="Stewart A."/>
            <person name="Sgouros J.G."/>
            <person name="Peat N."/>
            <person name="Hayles J."/>
            <person name="Baker S.G."/>
            <person name="Basham D."/>
            <person name="Bowman S."/>
            <person name="Brooks K."/>
            <person name="Brown D."/>
            <person name="Brown S."/>
            <person name="Chillingworth T."/>
            <person name="Churcher C.M."/>
            <person name="Collins M."/>
            <person name="Connor R."/>
            <person name="Cronin A."/>
            <person name="Davis P."/>
            <person name="Feltwell T."/>
            <person name="Fraser A."/>
            <person name="Gentles S."/>
            <person name="Goble A."/>
            <person name="Hamlin N."/>
            <person name="Harris D.E."/>
            <person name="Hidalgo J."/>
            <person name="Hodgson G."/>
            <person name="Holroyd S."/>
            <person name="Hornsby T."/>
            <person name="Howarth S."/>
            <person name="Huckle E.J."/>
            <person name="Hunt S."/>
            <person name="Jagels K."/>
            <person name="James K.D."/>
            <person name="Jones L."/>
            <person name="Jones M."/>
            <person name="Leather S."/>
            <person name="McDonald S."/>
            <person name="McLean J."/>
            <person name="Mooney P."/>
            <person name="Moule S."/>
            <person name="Mungall K.L."/>
            <person name="Murphy L.D."/>
            <person name="Niblett D."/>
            <person name="Odell C."/>
            <person name="Oliver K."/>
            <person name="O'Neil S."/>
            <person name="Pearson D."/>
            <person name="Quail M.A."/>
            <person name="Rabbinowitsch E."/>
            <person name="Rutherford K.M."/>
            <person name="Rutter S."/>
            <person name="Saunders D."/>
            <person name="Seeger K."/>
            <person name="Sharp S."/>
            <person name="Skelton J."/>
            <person name="Simmonds M.N."/>
            <person name="Squares R."/>
            <person name="Squares S."/>
            <person name="Stevens K."/>
            <person name="Taylor K."/>
            <person name="Taylor R.G."/>
            <person name="Tivey A."/>
            <person name="Walsh S.V."/>
            <person name="Warren T."/>
            <person name="Whitehead S."/>
            <person name="Woodward J.R."/>
            <person name="Volckaert G."/>
            <person name="Aert R."/>
            <person name="Robben J."/>
            <person name="Grymonprez B."/>
            <person name="Weltjens I."/>
            <person name="Vanstreels E."/>
            <person name="Rieger M."/>
            <person name="Schaefer M."/>
            <person name="Mueller-Auer S."/>
            <person name="Gabel C."/>
            <person name="Fuchs M."/>
            <person name="Duesterhoeft A."/>
            <person name="Fritzc C."/>
            <person name="Holzer E."/>
            <person name="Moestl D."/>
            <person name="Hilbert H."/>
            <person name="Borzym K."/>
            <person name="Langer I."/>
            <person name="Beck A."/>
            <person name="Lehrach H."/>
            <person name="Reinhardt R."/>
            <person name="Pohl T.M."/>
            <person name="Eger P."/>
            <person name="Zimmermann W."/>
            <person name="Wedler H."/>
            <person name="Wambutt R."/>
            <person name="Purnelle B."/>
            <person name="Goffeau A."/>
            <person name="Cadieu E."/>
            <person name="Dreano S."/>
            <person name="Gloux S."/>
            <person name="Lelaure V."/>
            <person name="Mottier S."/>
            <person name="Galibert F."/>
            <person name="Aves S.J."/>
            <person name="Xiang Z."/>
            <person name="Hunt C."/>
            <person name="Moore K."/>
            <person name="Hurst S.M."/>
            <person name="Lucas M."/>
            <person name="Rochet M."/>
            <person name="Gaillardin C."/>
            <person name="Tallada V.A."/>
            <person name="Garzon A."/>
            <person name="Thode G."/>
            <person name="Daga R.R."/>
            <person name="Cruzado L."/>
            <person name="Jimenez J."/>
            <person name="Sanchez M."/>
            <person name="del Rey F."/>
            <person name="Benito J."/>
            <person name="Dominguez A."/>
            <person name="Revuelta J.L."/>
            <person name="Moreno S."/>
            <person name="Armstrong J."/>
            <person name="Forsburg S.L."/>
            <person name="Cerutti L."/>
            <person name="Lowe T."/>
            <person name="McCombie W.R."/>
            <person name="Paulsen I."/>
            <person name="Potashkin J."/>
            <person name="Shpakovski G.V."/>
            <person name="Ussery D."/>
            <person name="Barrell B.G."/>
            <person name="Nurse P."/>
        </authorList>
    </citation>
    <scope>NUCLEOTIDE SEQUENCE [LARGE SCALE GENOMIC DNA]</scope>
    <source>
        <strain>972 / ATCC 24843</strain>
    </source>
</reference>
<reference key="3">
    <citation type="journal article" date="2000" name="Genes Cells">
        <title>Large-scale screening of intracellular protein localization in living fission yeast cells by the use of a GFP-fusion genomic DNA library.</title>
        <authorList>
            <person name="Ding D.-Q."/>
            <person name="Tomita Y."/>
            <person name="Yamamoto A."/>
            <person name="Chikashige Y."/>
            <person name="Haraguchi T."/>
            <person name="Hiraoka Y."/>
        </authorList>
    </citation>
    <scope>NUCLEOTIDE SEQUENCE [LARGE SCALE GENOMIC DNA] OF 113-134</scope>
    <scope>SUBCELLULAR LOCATION</scope>
    <source>
        <strain>ATCC 38364 / 968</strain>
    </source>
</reference>
<reference key="4">
    <citation type="journal article" date="2003" name="Genes Dev.">
        <title>Cop9/signalosome subunits and Pcu4 regulate ribonucleotide reductase by both checkpoint-dependent and -independent mechanisms.</title>
        <authorList>
            <person name="Liu C."/>
            <person name="Powell K.A."/>
            <person name="Mundt K."/>
            <person name="Wu L."/>
            <person name="Carr A.M."/>
            <person name="Caspari T."/>
        </authorList>
    </citation>
    <scope>FUNCTION</scope>
</reference>